<geneLocation type="mitochondrion"/>
<protein>
    <recommendedName>
        <fullName>Cytochrome b</fullName>
    </recommendedName>
    <alternativeName>
        <fullName>Complex III subunit 3</fullName>
    </alternativeName>
    <alternativeName>
        <fullName>Complex III subunit III</fullName>
    </alternativeName>
    <alternativeName>
        <fullName>Cytochrome b-c1 complex subunit 3</fullName>
    </alternativeName>
    <alternativeName>
        <fullName>Ubiquinol-cytochrome-c reductase complex cytochrome b subunit</fullName>
    </alternativeName>
</protein>
<organism>
    <name type="scientific">Ctenomys frater</name>
    <name type="common">Forest tuco-tuco</name>
    <dbReference type="NCBI Taxonomy" id="61867"/>
    <lineage>
        <taxon>Eukaryota</taxon>
        <taxon>Metazoa</taxon>
        <taxon>Chordata</taxon>
        <taxon>Craniata</taxon>
        <taxon>Vertebrata</taxon>
        <taxon>Euteleostomi</taxon>
        <taxon>Mammalia</taxon>
        <taxon>Eutheria</taxon>
        <taxon>Euarchontoglires</taxon>
        <taxon>Glires</taxon>
        <taxon>Rodentia</taxon>
        <taxon>Hystricomorpha</taxon>
        <taxon>Ctenomyidae</taxon>
        <taxon>Ctenomys</taxon>
    </lineage>
</organism>
<dbReference type="EMBL" id="AF007046">
    <property type="protein sequence ID" value="AAB69205.1"/>
    <property type="molecule type" value="Genomic_DNA"/>
</dbReference>
<dbReference type="EMBL" id="AF007045">
    <property type="protein sequence ID" value="AAB69204.1"/>
    <property type="molecule type" value="Genomic_DNA"/>
</dbReference>
<dbReference type="SMR" id="O21789"/>
<dbReference type="GO" id="GO:0005743">
    <property type="term" value="C:mitochondrial inner membrane"/>
    <property type="evidence" value="ECO:0007669"/>
    <property type="project" value="UniProtKB-SubCell"/>
</dbReference>
<dbReference type="GO" id="GO:0045275">
    <property type="term" value="C:respiratory chain complex III"/>
    <property type="evidence" value="ECO:0007669"/>
    <property type="project" value="InterPro"/>
</dbReference>
<dbReference type="GO" id="GO:0046872">
    <property type="term" value="F:metal ion binding"/>
    <property type="evidence" value="ECO:0007669"/>
    <property type="project" value="UniProtKB-KW"/>
</dbReference>
<dbReference type="GO" id="GO:0008121">
    <property type="term" value="F:ubiquinol-cytochrome-c reductase activity"/>
    <property type="evidence" value="ECO:0007669"/>
    <property type="project" value="InterPro"/>
</dbReference>
<dbReference type="GO" id="GO:0006122">
    <property type="term" value="P:mitochondrial electron transport, ubiquinol to cytochrome c"/>
    <property type="evidence" value="ECO:0007669"/>
    <property type="project" value="TreeGrafter"/>
</dbReference>
<dbReference type="CDD" id="cd00290">
    <property type="entry name" value="cytochrome_b_C"/>
    <property type="match status" value="1"/>
</dbReference>
<dbReference type="CDD" id="cd00284">
    <property type="entry name" value="Cytochrome_b_N"/>
    <property type="match status" value="1"/>
</dbReference>
<dbReference type="FunFam" id="1.20.810.10:FF:000002">
    <property type="entry name" value="Cytochrome b"/>
    <property type="match status" value="1"/>
</dbReference>
<dbReference type="Gene3D" id="1.20.810.10">
    <property type="entry name" value="Cytochrome Bc1 Complex, Chain C"/>
    <property type="match status" value="1"/>
</dbReference>
<dbReference type="InterPro" id="IPR005798">
    <property type="entry name" value="Cyt_b/b6_C"/>
</dbReference>
<dbReference type="InterPro" id="IPR036150">
    <property type="entry name" value="Cyt_b/b6_C_sf"/>
</dbReference>
<dbReference type="InterPro" id="IPR005797">
    <property type="entry name" value="Cyt_b/b6_N"/>
</dbReference>
<dbReference type="InterPro" id="IPR027387">
    <property type="entry name" value="Cytb/b6-like_sf"/>
</dbReference>
<dbReference type="InterPro" id="IPR030689">
    <property type="entry name" value="Cytochrome_b"/>
</dbReference>
<dbReference type="InterPro" id="IPR048260">
    <property type="entry name" value="Cytochrome_b_C_euk/bac"/>
</dbReference>
<dbReference type="InterPro" id="IPR048259">
    <property type="entry name" value="Cytochrome_b_N_euk/bac"/>
</dbReference>
<dbReference type="InterPro" id="IPR016174">
    <property type="entry name" value="Di-haem_cyt_TM"/>
</dbReference>
<dbReference type="PANTHER" id="PTHR19271">
    <property type="entry name" value="CYTOCHROME B"/>
    <property type="match status" value="1"/>
</dbReference>
<dbReference type="PANTHER" id="PTHR19271:SF16">
    <property type="entry name" value="CYTOCHROME B"/>
    <property type="match status" value="1"/>
</dbReference>
<dbReference type="Pfam" id="PF00032">
    <property type="entry name" value="Cytochrom_B_C"/>
    <property type="match status" value="1"/>
</dbReference>
<dbReference type="Pfam" id="PF00033">
    <property type="entry name" value="Cytochrome_B"/>
    <property type="match status" value="1"/>
</dbReference>
<dbReference type="PIRSF" id="PIRSF038885">
    <property type="entry name" value="COB"/>
    <property type="match status" value="1"/>
</dbReference>
<dbReference type="SUPFAM" id="SSF81648">
    <property type="entry name" value="a domain/subunit of cytochrome bc1 complex (Ubiquinol-cytochrome c reductase)"/>
    <property type="match status" value="1"/>
</dbReference>
<dbReference type="SUPFAM" id="SSF81342">
    <property type="entry name" value="Transmembrane di-heme cytochromes"/>
    <property type="match status" value="1"/>
</dbReference>
<dbReference type="PROSITE" id="PS51003">
    <property type="entry name" value="CYTB_CTER"/>
    <property type="match status" value="1"/>
</dbReference>
<dbReference type="PROSITE" id="PS51002">
    <property type="entry name" value="CYTB_NTER"/>
    <property type="match status" value="1"/>
</dbReference>
<reference key="1">
    <citation type="journal article" date="1998" name="Mol. Phylogenet. Evol.">
        <title>The molecular phylogenetics of tuco-tucos (genus Ctenomys, Rodentia: Octodontidae) suggests an early burst of speciation.</title>
        <authorList>
            <person name="Lessa E.P."/>
            <person name="Cook J.A."/>
        </authorList>
    </citation>
    <scope>NUCLEOTIDE SEQUENCE [GENOMIC DNA]</scope>
</reference>
<proteinExistence type="inferred from homology"/>
<sequence length="379" mass="42840">MTNTRKSHPLIKIVNHSFIDLPAPSNISAWWNFGSLLGVCLGLQILTGLFLAMHYTADTTTAFSSVAHICRDVNYGWLIRYLHANGASMFFIFLYFHIGRGIYYGSYTFMDTWNIGVLLLFAVMATAFMGYVLPWGQMSFWGATVITNLLSAIPYIGPTLVEWIWGGFSVDKATLTRFFAFHFILPFIITAMVMIHLLFLHETGSNNPSGMNSDSDKIPFHPYYTIKDILGALFMMIMLMSLVMFTPDLLGDPDNYTPANPLNTPPHIKPEWYFLFAYAILRSIPNKLGGVLALASSILILTLFPIIHLSKQRSMSFRPFSQCLMWLLVANLLILTWIGGQPVEHPFIIIGQLASVTYFFTILILMPSTALMEDKLLKW</sequence>
<keyword id="KW-0249">Electron transport</keyword>
<keyword id="KW-0349">Heme</keyword>
<keyword id="KW-0408">Iron</keyword>
<keyword id="KW-0472">Membrane</keyword>
<keyword id="KW-0479">Metal-binding</keyword>
<keyword id="KW-0496">Mitochondrion</keyword>
<keyword id="KW-0999">Mitochondrion inner membrane</keyword>
<keyword id="KW-0679">Respiratory chain</keyword>
<keyword id="KW-0812">Transmembrane</keyword>
<keyword id="KW-1133">Transmembrane helix</keyword>
<keyword id="KW-0813">Transport</keyword>
<keyword id="KW-0830">Ubiquinone</keyword>
<gene>
    <name type="primary">MT-CYB</name>
    <name type="synonym">COB</name>
    <name type="synonym">CYTB</name>
    <name type="synonym">MTCYB</name>
</gene>
<evidence type="ECO:0000250" key="1"/>
<evidence type="ECO:0000250" key="2">
    <source>
        <dbReference type="UniProtKB" id="P00157"/>
    </source>
</evidence>
<evidence type="ECO:0000255" key="3">
    <source>
        <dbReference type="PROSITE-ProRule" id="PRU00967"/>
    </source>
</evidence>
<evidence type="ECO:0000255" key="4">
    <source>
        <dbReference type="PROSITE-ProRule" id="PRU00968"/>
    </source>
</evidence>
<accession>O21789</accession>
<comment type="function">
    <text evidence="2">Component of the ubiquinol-cytochrome c reductase complex (complex III or cytochrome b-c1 complex) that is part of the mitochondrial respiratory chain. The b-c1 complex mediates electron transfer from ubiquinol to cytochrome c. Contributes to the generation of a proton gradient across the mitochondrial membrane that is then used for ATP synthesis.</text>
</comment>
<comment type="cofactor">
    <cofactor evidence="2">
        <name>heme b</name>
        <dbReference type="ChEBI" id="CHEBI:60344"/>
    </cofactor>
    <text evidence="2">Binds 2 heme b groups non-covalently.</text>
</comment>
<comment type="subunit">
    <text evidence="2">The cytochrome bc1 complex contains 11 subunits: 3 respiratory subunits (MT-CYB, CYC1 and UQCRFS1), 2 core proteins (UQCRC1 and UQCRC2) and 6 low-molecular weight proteins (UQCRH/QCR6, UQCRB/QCR7, UQCRQ/QCR8, UQCR10/QCR9, UQCR11/QCR10 and a cleavage product of UQCRFS1). This cytochrome bc1 complex then forms a dimer.</text>
</comment>
<comment type="subcellular location">
    <subcellularLocation>
        <location evidence="2">Mitochondrion inner membrane</location>
        <topology evidence="2">Multi-pass membrane protein</topology>
    </subcellularLocation>
</comment>
<comment type="miscellaneous">
    <text evidence="1">Heme 1 (or BL or b562) is low-potential and absorbs at about 562 nm, and heme 2 (or BH or b566) is high-potential and absorbs at about 566 nm.</text>
</comment>
<comment type="similarity">
    <text evidence="3 4">Belongs to the cytochrome b family.</text>
</comment>
<comment type="caution">
    <text evidence="2">The full-length protein contains only eight transmembrane helices, not nine as predicted by bioinformatics tools.</text>
</comment>
<feature type="chain" id="PRO_0000255019" description="Cytochrome b">
    <location>
        <begin position="1"/>
        <end position="379"/>
    </location>
</feature>
<feature type="transmembrane region" description="Helical" evidence="2">
    <location>
        <begin position="33"/>
        <end position="53"/>
    </location>
</feature>
<feature type="transmembrane region" description="Helical" evidence="2">
    <location>
        <begin position="77"/>
        <end position="98"/>
    </location>
</feature>
<feature type="transmembrane region" description="Helical" evidence="2">
    <location>
        <begin position="113"/>
        <end position="133"/>
    </location>
</feature>
<feature type="transmembrane region" description="Helical" evidence="2">
    <location>
        <begin position="178"/>
        <end position="198"/>
    </location>
</feature>
<feature type="transmembrane region" description="Helical" evidence="2">
    <location>
        <begin position="226"/>
        <end position="246"/>
    </location>
</feature>
<feature type="transmembrane region" description="Helical" evidence="2">
    <location>
        <begin position="288"/>
        <end position="308"/>
    </location>
</feature>
<feature type="transmembrane region" description="Helical" evidence="2">
    <location>
        <begin position="320"/>
        <end position="340"/>
    </location>
</feature>
<feature type="transmembrane region" description="Helical" evidence="2">
    <location>
        <begin position="347"/>
        <end position="367"/>
    </location>
</feature>
<feature type="binding site" description="axial binding residue" evidence="2">
    <location>
        <position position="83"/>
    </location>
    <ligand>
        <name>heme b</name>
        <dbReference type="ChEBI" id="CHEBI:60344"/>
        <label>b562</label>
    </ligand>
    <ligandPart>
        <name>Fe</name>
        <dbReference type="ChEBI" id="CHEBI:18248"/>
    </ligandPart>
</feature>
<feature type="binding site" description="axial binding residue" evidence="2">
    <location>
        <position position="97"/>
    </location>
    <ligand>
        <name>heme b</name>
        <dbReference type="ChEBI" id="CHEBI:60344"/>
        <label>b566</label>
    </ligand>
    <ligandPart>
        <name>Fe</name>
        <dbReference type="ChEBI" id="CHEBI:18248"/>
    </ligandPart>
</feature>
<feature type="binding site" description="axial binding residue" evidence="2">
    <location>
        <position position="182"/>
    </location>
    <ligand>
        <name>heme b</name>
        <dbReference type="ChEBI" id="CHEBI:60344"/>
        <label>b562</label>
    </ligand>
    <ligandPart>
        <name>Fe</name>
        <dbReference type="ChEBI" id="CHEBI:18248"/>
    </ligandPart>
</feature>
<feature type="binding site" description="axial binding residue" evidence="2">
    <location>
        <position position="196"/>
    </location>
    <ligand>
        <name>heme b</name>
        <dbReference type="ChEBI" id="CHEBI:60344"/>
        <label>b566</label>
    </ligand>
    <ligandPart>
        <name>Fe</name>
        <dbReference type="ChEBI" id="CHEBI:18248"/>
    </ligandPart>
</feature>
<feature type="binding site" evidence="2">
    <location>
        <position position="201"/>
    </location>
    <ligand>
        <name>a ubiquinone</name>
        <dbReference type="ChEBI" id="CHEBI:16389"/>
    </ligand>
</feature>
<name>CYB_CTEFT</name>